<comment type="function">
    <text evidence="1">Produces ATP from ADP in the presence of a proton gradient across the membrane. The alpha chain is a regulatory subunit.</text>
</comment>
<comment type="catalytic activity">
    <reaction evidence="1">
        <text>ATP + H2O + 4 H(+)(in) = ADP + phosphate + 5 H(+)(out)</text>
        <dbReference type="Rhea" id="RHEA:57720"/>
        <dbReference type="ChEBI" id="CHEBI:15377"/>
        <dbReference type="ChEBI" id="CHEBI:15378"/>
        <dbReference type="ChEBI" id="CHEBI:30616"/>
        <dbReference type="ChEBI" id="CHEBI:43474"/>
        <dbReference type="ChEBI" id="CHEBI:456216"/>
        <dbReference type="EC" id="7.1.2.2"/>
    </reaction>
</comment>
<comment type="subunit">
    <text evidence="1">F-type ATPases have 2 components, CF(1) - the catalytic core - and CF(0) - the membrane proton channel. CF(1) has five subunits: alpha(3), beta(3), gamma(1), delta(1), epsilon(1). CF(0) has four main subunits: a, b, b' and c.</text>
</comment>
<comment type="subcellular location">
    <subcellularLocation>
        <location evidence="1">Plastid</location>
        <location evidence="1">Chloroplast thylakoid membrane</location>
        <topology evidence="1">Peripheral membrane protein</topology>
    </subcellularLocation>
</comment>
<comment type="similarity">
    <text evidence="1">Belongs to the ATPase alpha/beta chains family.</text>
</comment>
<proteinExistence type="inferred from homology"/>
<sequence length="507" mass="55322">MVTIRADEISNIIRERIEQYNREVKIVNTGTVLQVGDGIARIYGLDEVMAGELVEFEEGTIGIALNLESNNVGVVLMGDGLMIQEGSSVKATGKIAQIPVSEAYLGRVINALAKPIDGRGAISSSESRLIESPAPGIISRRSVYEPLQTGLIAIDSMIPIGRGQRELIIGDRQTGKTAVATDTILNQQGQNVICVYVAIGQKASSVAQVVNALQERGAMEYTIVVAETADSPATLQYLAPYTGAALAEYFMYRERHTLIIYDDLSKQAQAYRQMSLLLRRPPGREAYPGDVFYLHSRLLERAAKPSSSLGEGSMTALPIVETQSGDVSAYIPTNVISITDGQIFLSADLFNAGIRPAINVGISVSRVGSAAQIKAMKQVAGKLKLELAQFAELEAFAQFASDLDKATQNQLARGQRLRELLKQSQAAPFTVAEQIMTIYTGTNGYLDSLEIGQVRKFLVELRTYLKTSKTQFQEIISSTKTFTEEAEALLKEAIQEQMERFLLQEQV</sequence>
<protein>
    <recommendedName>
        <fullName evidence="1">ATP synthase subunit alpha, chloroplastic</fullName>
        <ecNumber evidence="1">7.1.2.2</ecNumber>
    </recommendedName>
    <alternativeName>
        <fullName evidence="1">ATP synthase F1 sector subunit alpha</fullName>
    </alternativeName>
    <alternativeName>
        <fullName evidence="1">F-ATPase subunit alpha</fullName>
    </alternativeName>
</protein>
<keyword id="KW-0066">ATP synthesis</keyword>
<keyword id="KW-0067">ATP-binding</keyword>
<keyword id="KW-0139">CF(1)</keyword>
<keyword id="KW-0150">Chloroplast</keyword>
<keyword id="KW-0375">Hydrogen ion transport</keyword>
<keyword id="KW-0406">Ion transport</keyword>
<keyword id="KW-0472">Membrane</keyword>
<keyword id="KW-0547">Nucleotide-binding</keyword>
<keyword id="KW-0934">Plastid</keyword>
<keyword id="KW-1185">Reference proteome</keyword>
<keyword id="KW-0793">Thylakoid</keyword>
<keyword id="KW-1278">Translocase</keyword>
<keyword id="KW-0813">Transport</keyword>
<name>ATPA_POPTR</name>
<organism>
    <name type="scientific">Populus trichocarpa</name>
    <name type="common">Western balsam poplar</name>
    <name type="synonym">Populus balsamifera subsp. trichocarpa</name>
    <dbReference type="NCBI Taxonomy" id="3694"/>
    <lineage>
        <taxon>Eukaryota</taxon>
        <taxon>Viridiplantae</taxon>
        <taxon>Streptophyta</taxon>
        <taxon>Embryophyta</taxon>
        <taxon>Tracheophyta</taxon>
        <taxon>Spermatophyta</taxon>
        <taxon>Magnoliopsida</taxon>
        <taxon>eudicotyledons</taxon>
        <taxon>Gunneridae</taxon>
        <taxon>Pentapetalae</taxon>
        <taxon>rosids</taxon>
        <taxon>fabids</taxon>
        <taxon>Malpighiales</taxon>
        <taxon>Salicaceae</taxon>
        <taxon>Saliceae</taxon>
        <taxon>Populus</taxon>
    </lineage>
</organism>
<geneLocation type="chloroplast"/>
<reference key="1">
    <citation type="journal article" date="2006" name="Science">
        <title>The genome of black cottonwood, Populus trichocarpa (Torr. &amp; Gray).</title>
        <authorList>
            <person name="Tuskan G.A."/>
            <person name="Difazio S."/>
            <person name="Jansson S."/>
            <person name="Bohlmann J."/>
            <person name="Grigoriev I."/>
            <person name="Hellsten U."/>
            <person name="Putnam N."/>
            <person name="Ralph S."/>
            <person name="Rombauts S."/>
            <person name="Salamov A."/>
            <person name="Schein J."/>
            <person name="Sterck L."/>
            <person name="Aerts A."/>
            <person name="Bhalerao R.R."/>
            <person name="Bhalerao R.P."/>
            <person name="Blaudez D."/>
            <person name="Boerjan W."/>
            <person name="Brun A."/>
            <person name="Brunner A."/>
            <person name="Busov V."/>
            <person name="Campbell M."/>
            <person name="Carlson J."/>
            <person name="Chalot M."/>
            <person name="Chapman J."/>
            <person name="Chen G.-L."/>
            <person name="Cooper D."/>
            <person name="Coutinho P.M."/>
            <person name="Couturier J."/>
            <person name="Covert S."/>
            <person name="Cronk Q."/>
            <person name="Cunningham R."/>
            <person name="Davis J."/>
            <person name="Degroeve S."/>
            <person name="Dejardin A."/>
            <person name="dePamphilis C.W."/>
            <person name="Detter J."/>
            <person name="Dirks B."/>
            <person name="Dubchak I."/>
            <person name="Duplessis S."/>
            <person name="Ehlting J."/>
            <person name="Ellis B."/>
            <person name="Gendler K."/>
            <person name="Goodstein D."/>
            <person name="Gribskov M."/>
            <person name="Grimwood J."/>
            <person name="Groover A."/>
            <person name="Gunter L."/>
            <person name="Hamberger B."/>
            <person name="Heinze B."/>
            <person name="Helariutta Y."/>
            <person name="Henrissat B."/>
            <person name="Holligan D."/>
            <person name="Holt R."/>
            <person name="Huang W."/>
            <person name="Islam-Faridi N."/>
            <person name="Jones S."/>
            <person name="Jones-Rhoades M."/>
            <person name="Jorgensen R."/>
            <person name="Joshi C."/>
            <person name="Kangasjaervi J."/>
            <person name="Karlsson J."/>
            <person name="Kelleher C."/>
            <person name="Kirkpatrick R."/>
            <person name="Kirst M."/>
            <person name="Kohler A."/>
            <person name="Kalluri U."/>
            <person name="Larimer F."/>
            <person name="Leebens-Mack J."/>
            <person name="Leple J.-C."/>
            <person name="Locascio P."/>
            <person name="Lou Y."/>
            <person name="Lucas S."/>
            <person name="Martin F."/>
            <person name="Montanini B."/>
            <person name="Napoli C."/>
            <person name="Nelson D.R."/>
            <person name="Nelson C."/>
            <person name="Nieminen K."/>
            <person name="Nilsson O."/>
            <person name="Pereda V."/>
            <person name="Peter G."/>
            <person name="Philippe R."/>
            <person name="Pilate G."/>
            <person name="Poliakov A."/>
            <person name="Razumovskaya J."/>
            <person name="Richardson P."/>
            <person name="Rinaldi C."/>
            <person name="Ritland K."/>
            <person name="Rouze P."/>
            <person name="Ryaboy D."/>
            <person name="Schmutz J."/>
            <person name="Schrader J."/>
            <person name="Segerman B."/>
            <person name="Shin H."/>
            <person name="Siddiqui A."/>
            <person name="Sterky F."/>
            <person name="Terry A."/>
            <person name="Tsai C.-J."/>
            <person name="Uberbacher E."/>
            <person name="Unneberg P."/>
            <person name="Vahala J."/>
            <person name="Wall K."/>
            <person name="Wessler S."/>
            <person name="Yang G."/>
            <person name="Yin T."/>
            <person name="Douglas C."/>
            <person name="Marra M."/>
            <person name="Sandberg G."/>
            <person name="Van de Peer Y."/>
            <person name="Rokhsar D.S."/>
        </authorList>
    </citation>
    <scope>NUCLEOTIDE SEQUENCE [LARGE SCALE GENOMIC DNA]</scope>
    <source>
        <strain>cv. Nisqually</strain>
    </source>
</reference>
<gene>
    <name evidence="1" type="primary">atpA</name>
    <name type="ordered locus">Poptr_cp005</name>
</gene>
<evidence type="ECO:0000255" key="1">
    <source>
        <dbReference type="HAMAP-Rule" id="MF_01346"/>
    </source>
</evidence>
<dbReference type="EC" id="7.1.2.2" evidence="1"/>
<dbReference type="EMBL" id="EF489041">
    <property type="protein sequence ID" value="ABO36687.1"/>
    <property type="molecule type" value="Genomic_DNA"/>
</dbReference>
<dbReference type="RefSeq" id="YP_001109484.1">
    <property type="nucleotide sequence ID" value="NC_009143.1"/>
</dbReference>
<dbReference type="SMR" id="A4GYP3"/>
<dbReference type="FunCoup" id="A4GYP3">
    <property type="interactions" value="403"/>
</dbReference>
<dbReference type="STRING" id="3694.A4GYP3"/>
<dbReference type="EnsemblPlants" id="Potri.013G138000.1.v4.1">
    <property type="protein sequence ID" value="Potri.013G138000.1.v4.1"/>
    <property type="gene ID" value="Potri.013G138000.v4.1"/>
</dbReference>
<dbReference type="GeneID" id="4929638"/>
<dbReference type="Gramene" id="Potri.013G138000.1.v4.1">
    <property type="protein sequence ID" value="Potri.013G138000.1.v4.1"/>
    <property type="gene ID" value="Potri.013G138000.v4.1"/>
</dbReference>
<dbReference type="KEGG" id="pop:4929638"/>
<dbReference type="InParanoid" id="A4GYP3"/>
<dbReference type="OMA" id="WRISHIR"/>
<dbReference type="OrthoDB" id="9805536at2759"/>
<dbReference type="Proteomes" id="UP000006729">
    <property type="component" value="Chloroplast"/>
</dbReference>
<dbReference type="GO" id="GO:0009535">
    <property type="term" value="C:chloroplast thylakoid membrane"/>
    <property type="evidence" value="ECO:0007669"/>
    <property type="project" value="UniProtKB-SubCell"/>
</dbReference>
<dbReference type="GO" id="GO:0045259">
    <property type="term" value="C:proton-transporting ATP synthase complex"/>
    <property type="evidence" value="ECO:0007669"/>
    <property type="project" value="UniProtKB-KW"/>
</dbReference>
<dbReference type="GO" id="GO:0010319">
    <property type="term" value="C:stromule"/>
    <property type="evidence" value="ECO:0007669"/>
    <property type="project" value="EnsemblPlants"/>
</dbReference>
<dbReference type="GO" id="GO:0043531">
    <property type="term" value="F:ADP binding"/>
    <property type="evidence" value="ECO:0000318"/>
    <property type="project" value="GO_Central"/>
</dbReference>
<dbReference type="GO" id="GO:0005524">
    <property type="term" value="F:ATP binding"/>
    <property type="evidence" value="ECO:0000318"/>
    <property type="project" value="GO_Central"/>
</dbReference>
<dbReference type="GO" id="GO:0003729">
    <property type="term" value="F:mRNA binding"/>
    <property type="evidence" value="ECO:0007669"/>
    <property type="project" value="EnsemblPlants"/>
</dbReference>
<dbReference type="GO" id="GO:0046933">
    <property type="term" value="F:proton-transporting ATP synthase activity, rotational mechanism"/>
    <property type="evidence" value="ECO:0007669"/>
    <property type="project" value="UniProtKB-UniRule"/>
</dbReference>
<dbReference type="GO" id="GO:0015986">
    <property type="term" value="P:proton motive force-driven ATP synthesis"/>
    <property type="evidence" value="ECO:0000318"/>
    <property type="project" value="GO_Central"/>
</dbReference>
<dbReference type="GO" id="GO:0009409">
    <property type="term" value="P:response to cold"/>
    <property type="evidence" value="ECO:0007669"/>
    <property type="project" value="EnsemblPlants"/>
</dbReference>
<dbReference type="CDD" id="cd18113">
    <property type="entry name" value="ATP-synt_F1_alpha_C"/>
    <property type="match status" value="1"/>
</dbReference>
<dbReference type="CDD" id="cd18116">
    <property type="entry name" value="ATP-synt_F1_alpha_N"/>
    <property type="match status" value="1"/>
</dbReference>
<dbReference type="CDD" id="cd01132">
    <property type="entry name" value="F1-ATPase_alpha_CD"/>
    <property type="match status" value="1"/>
</dbReference>
<dbReference type="FunFam" id="1.20.150.20:FF:000001">
    <property type="entry name" value="ATP synthase subunit alpha"/>
    <property type="match status" value="1"/>
</dbReference>
<dbReference type="FunFam" id="2.40.30.20:FF:000001">
    <property type="entry name" value="ATP synthase subunit alpha"/>
    <property type="match status" value="1"/>
</dbReference>
<dbReference type="FunFam" id="3.40.50.300:FF:000002">
    <property type="entry name" value="ATP synthase subunit alpha"/>
    <property type="match status" value="1"/>
</dbReference>
<dbReference type="Gene3D" id="2.40.30.20">
    <property type="match status" value="1"/>
</dbReference>
<dbReference type="Gene3D" id="1.20.150.20">
    <property type="entry name" value="ATP synthase alpha/beta chain, C-terminal domain"/>
    <property type="match status" value="1"/>
</dbReference>
<dbReference type="Gene3D" id="3.40.50.300">
    <property type="entry name" value="P-loop containing nucleotide triphosphate hydrolases"/>
    <property type="match status" value="1"/>
</dbReference>
<dbReference type="HAMAP" id="MF_01346">
    <property type="entry name" value="ATP_synth_alpha_bact"/>
    <property type="match status" value="1"/>
</dbReference>
<dbReference type="InterPro" id="IPR023366">
    <property type="entry name" value="ATP_synth_asu-like_sf"/>
</dbReference>
<dbReference type="InterPro" id="IPR000793">
    <property type="entry name" value="ATP_synth_asu_C"/>
</dbReference>
<dbReference type="InterPro" id="IPR038376">
    <property type="entry name" value="ATP_synth_asu_C_sf"/>
</dbReference>
<dbReference type="InterPro" id="IPR033732">
    <property type="entry name" value="ATP_synth_F1_a_nt-bd_dom"/>
</dbReference>
<dbReference type="InterPro" id="IPR005294">
    <property type="entry name" value="ATP_synth_F1_asu"/>
</dbReference>
<dbReference type="InterPro" id="IPR020003">
    <property type="entry name" value="ATPase_a/bsu_AS"/>
</dbReference>
<dbReference type="InterPro" id="IPR004100">
    <property type="entry name" value="ATPase_F1/V1/A1_a/bsu_N"/>
</dbReference>
<dbReference type="InterPro" id="IPR036121">
    <property type="entry name" value="ATPase_F1/V1/A1_a/bsu_N_sf"/>
</dbReference>
<dbReference type="InterPro" id="IPR000194">
    <property type="entry name" value="ATPase_F1/V1/A1_a/bsu_nucl-bd"/>
</dbReference>
<dbReference type="InterPro" id="IPR027417">
    <property type="entry name" value="P-loop_NTPase"/>
</dbReference>
<dbReference type="NCBIfam" id="TIGR00962">
    <property type="entry name" value="atpA"/>
    <property type="match status" value="1"/>
</dbReference>
<dbReference type="NCBIfam" id="NF009884">
    <property type="entry name" value="PRK13343.1"/>
    <property type="match status" value="1"/>
</dbReference>
<dbReference type="PANTHER" id="PTHR48082">
    <property type="entry name" value="ATP SYNTHASE SUBUNIT ALPHA, MITOCHONDRIAL"/>
    <property type="match status" value="1"/>
</dbReference>
<dbReference type="PANTHER" id="PTHR48082:SF2">
    <property type="entry name" value="ATP SYNTHASE SUBUNIT ALPHA, MITOCHONDRIAL"/>
    <property type="match status" value="1"/>
</dbReference>
<dbReference type="Pfam" id="PF00006">
    <property type="entry name" value="ATP-synt_ab"/>
    <property type="match status" value="1"/>
</dbReference>
<dbReference type="Pfam" id="PF00306">
    <property type="entry name" value="ATP-synt_ab_C"/>
    <property type="match status" value="1"/>
</dbReference>
<dbReference type="Pfam" id="PF02874">
    <property type="entry name" value="ATP-synt_ab_N"/>
    <property type="match status" value="1"/>
</dbReference>
<dbReference type="PIRSF" id="PIRSF039088">
    <property type="entry name" value="F_ATPase_subunit_alpha"/>
    <property type="match status" value="1"/>
</dbReference>
<dbReference type="SUPFAM" id="SSF47917">
    <property type="entry name" value="C-terminal domain of alpha and beta subunits of F1 ATP synthase"/>
    <property type="match status" value="1"/>
</dbReference>
<dbReference type="SUPFAM" id="SSF50615">
    <property type="entry name" value="N-terminal domain of alpha and beta subunits of F1 ATP synthase"/>
    <property type="match status" value="1"/>
</dbReference>
<dbReference type="SUPFAM" id="SSF52540">
    <property type="entry name" value="P-loop containing nucleoside triphosphate hydrolases"/>
    <property type="match status" value="1"/>
</dbReference>
<dbReference type="PROSITE" id="PS00152">
    <property type="entry name" value="ATPASE_ALPHA_BETA"/>
    <property type="match status" value="1"/>
</dbReference>
<feature type="chain" id="PRO_0000339107" description="ATP synthase subunit alpha, chloroplastic">
    <location>
        <begin position="1"/>
        <end position="507"/>
    </location>
</feature>
<feature type="binding site" evidence="1">
    <location>
        <begin position="170"/>
        <end position="177"/>
    </location>
    <ligand>
        <name>ATP</name>
        <dbReference type="ChEBI" id="CHEBI:30616"/>
    </ligand>
</feature>
<feature type="site" description="Required for activity" evidence="1">
    <location>
        <position position="363"/>
    </location>
</feature>
<accession>A4GYP3</accession>